<reference key="1">
    <citation type="journal article" date="2003" name="Gene">
        <title>A third isoform of cytochrome c oxidase subunit VIII is present in mammals.</title>
        <authorList>
            <person name="Huettemann M."/>
            <person name="Schmidt T.R."/>
            <person name="Grossman L.I."/>
        </authorList>
    </citation>
    <scope>NUCLEOTIDE SEQUENCE [MRNA]</scope>
</reference>
<organism>
    <name type="scientific">Rattus norvegicus</name>
    <name type="common">Rat</name>
    <dbReference type="NCBI Taxonomy" id="10116"/>
    <lineage>
        <taxon>Eukaryota</taxon>
        <taxon>Metazoa</taxon>
        <taxon>Chordata</taxon>
        <taxon>Craniata</taxon>
        <taxon>Vertebrata</taxon>
        <taxon>Euteleostomi</taxon>
        <taxon>Mammalia</taxon>
        <taxon>Eutheria</taxon>
        <taxon>Euarchontoglires</taxon>
        <taxon>Glires</taxon>
        <taxon>Rodentia</taxon>
        <taxon>Myomorpha</taxon>
        <taxon>Muroidea</taxon>
        <taxon>Muridae</taxon>
        <taxon>Murinae</taxon>
        <taxon>Rattus</taxon>
    </lineage>
</organism>
<accession>Q7TNN2</accession>
<feature type="transit peptide" description="Mitochondrion" evidence="1">
    <location>
        <begin position="1"/>
        <end position="29"/>
    </location>
</feature>
<feature type="chain" id="PRO_0000006202" description="Cytochrome c oxidase subunit 8C, mitochondrial">
    <location>
        <begin position="30"/>
        <end position="72"/>
    </location>
</feature>
<feature type="topological domain" description="Mitochondrial matrix" evidence="1">
    <location>
        <begin position="30"/>
        <end position="40"/>
    </location>
</feature>
<feature type="transmembrane region" description="Helical" evidence="1">
    <location>
        <begin position="41"/>
        <end position="64"/>
    </location>
</feature>
<feature type="topological domain" description="Mitochondrial intermembrane" evidence="1">
    <location>
        <begin position="65"/>
        <end position="72"/>
    </location>
</feature>
<evidence type="ECO:0000250" key="1">
    <source>
        <dbReference type="UniProtKB" id="P10175"/>
    </source>
</evidence>
<evidence type="ECO:0000305" key="2"/>
<comment type="function">
    <text evidence="1">Component of the cytochrome c oxidase, the last enzyme in the mitochondrial electron transport chain which drives oxidative phosphorylation. The respiratory chain contains 3 multisubunit complexes succinate dehydrogenase (complex II, CII), ubiquinol-cytochrome c oxidoreductase (cytochrome b-c1 complex, complex III, CIII) and cytochrome c oxidase (complex IV, CIV), that cooperate to transfer electrons derived from NADH and succinate to molecular oxygen, creating an electrochemical gradient over the inner membrane that drives transmembrane transport and the ATP synthase. Cytochrome c oxidase is the component of the respiratory chain that catalyzes the reduction of oxygen to water. Electrons originating from reduced cytochrome c in the intermembrane space (IMS) are transferred via the dinuclear copper A center (CU(A)) of subunit 2 and heme A of subunit 1 to the active site in subunit 1, a binuclear center (BNC) formed by heme A3 and copper B (CU(B)). The BNC reduces molecular oxygen to 2 water molecules using 4 electrons from cytochrome c in the IMS and 4 protons from the mitochondrial matrix.</text>
</comment>
<comment type="pathway">
    <text evidence="1">Energy metabolism; oxidative phosphorylation.</text>
</comment>
<comment type="subunit">
    <text evidence="1">Component of the cytochrome c oxidase (complex IV, CIV), a multisubunit enzyme composed of 14 subunits. The complex is composed of a catalytic core of 3 subunits MT-CO1, MT-CO2 and MT-CO3, encoded in the mitochondrial DNA, and 11 supernumerary subunits COX4I, COX5A, COX5B, COX6A, COX6B, COX6C, COX7A, COX7B, COX7C, COX8 and NDUFA4, which are encoded in the nuclear genome. The complex exists as a monomer or a dimer and forms supercomplexes (SCs) in the inner mitochondrial membrane with NADH-ubiquinone oxidoreductase (complex I, CI) and ubiquinol-cytochrome c oxidoreductase (cytochrome b-c1 complex, complex III, CIII), resulting in different assemblies (supercomplex SCI(1)III(2)IV(1) and megacomplex MCI(2)III(2)IV(2)).</text>
</comment>
<comment type="subcellular location">
    <subcellularLocation>
        <location evidence="1">Mitochondrion inner membrane</location>
        <topology evidence="1">Single-pass membrane protein</topology>
    </subcellularLocation>
</comment>
<comment type="similarity">
    <text evidence="2">Belongs to the cytochrome c oxidase VIII family.</text>
</comment>
<gene>
    <name type="primary">Cox8c</name>
</gene>
<name>COX8C_RAT</name>
<proteinExistence type="inferred from homology"/>
<sequence length="72" mass="8073">MSRLLQFCSSLLRHRVVLFSKPGHSGRLSHSESPQNQVLTPTESVVGIVVFFATFFIPAAYVMSNLKFFKGE</sequence>
<dbReference type="EMBL" id="AY161005">
    <property type="protein sequence ID" value="AAO26194.1"/>
    <property type="molecule type" value="mRNA"/>
</dbReference>
<dbReference type="RefSeq" id="NP_898878.1">
    <property type="nucleotide sequence ID" value="NM_183055.2"/>
</dbReference>
<dbReference type="SMR" id="Q7TNN2"/>
<dbReference type="STRING" id="10116.ENSRNOP00000047295"/>
<dbReference type="PaxDb" id="10116-ENSRNOP00000047295"/>
<dbReference type="Ensembl" id="ENSRNOT00000052296.2">
    <property type="protein sequence ID" value="ENSRNOP00000047295.1"/>
    <property type="gene ID" value="ENSRNOG00000031106.2"/>
</dbReference>
<dbReference type="GeneID" id="360229"/>
<dbReference type="KEGG" id="rno:360229"/>
<dbReference type="UCSC" id="RGD:727840">
    <property type="organism name" value="rat"/>
</dbReference>
<dbReference type="AGR" id="RGD:727840"/>
<dbReference type="CTD" id="341947"/>
<dbReference type="RGD" id="727840">
    <property type="gene designation" value="Cox8c"/>
</dbReference>
<dbReference type="eggNOG" id="ENOG502TKKT">
    <property type="taxonomic scope" value="Eukaryota"/>
</dbReference>
<dbReference type="GeneTree" id="ENSGT00970000193543"/>
<dbReference type="HOGENOM" id="CLU_202012_0_0_1"/>
<dbReference type="InParanoid" id="Q7TNN2"/>
<dbReference type="OrthoDB" id="9623219at2759"/>
<dbReference type="PhylomeDB" id="Q7TNN2"/>
<dbReference type="TreeFam" id="TF105070"/>
<dbReference type="Reactome" id="R-RNO-5628897">
    <property type="pathway name" value="TP53 Regulates Metabolic Genes"/>
</dbReference>
<dbReference type="Reactome" id="R-RNO-611105">
    <property type="pathway name" value="Respiratory electron transport"/>
</dbReference>
<dbReference type="Reactome" id="R-RNO-9707564">
    <property type="pathway name" value="Cytoprotection by HMOX1"/>
</dbReference>
<dbReference type="Reactome" id="R-RNO-9864848">
    <property type="pathway name" value="Complex IV assembly"/>
</dbReference>
<dbReference type="UniPathway" id="UPA00705"/>
<dbReference type="PRO" id="PR:Q7TNN2"/>
<dbReference type="Proteomes" id="UP000002494">
    <property type="component" value="Chromosome 6"/>
</dbReference>
<dbReference type="Bgee" id="ENSRNOG00000031106">
    <property type="expression patterns" value="Expressed in testis and 3 other cell types or tissues"/>
</dbReference>
<dbReference type="GO" id="GO:0005743">
    <property type="term" value="C:mitochondrial inner membrane"/>
    <property type="evidence" value="ECO:0007669"/>
    <property type="project" value="UniProtKB-SubCell"/>
</dbReference>
<dbReference type="GO" id="GO:0005739">
    <property type="term" value="C:mitochondrion"/>
    <property type="evidence" value="ECO:0000266"/>
    <property type="project" value="RGD"/>
</dbReference>
<dbReference type="GO" id="GO:0045277">
    <property type="term" value="C:respiratory chain complex IV"/>
    <property type="evidence" value="ECO:0000318"/>
    <property type="project" value="GO_Central"/>
</dbReference>
<dbReference type="GO" id="GO:0006123">
    <property type="term" value="P:mitochondrial electron transport, cytochrome c to oxygen"/>
    <property type="evidence" value="ECO:0007669"/>
    <property type="project" value="InterPro"/>
</dbReference>
<dbReference type="Gene3D" id="4.10.81.10">
    <property type="entry name" value="Cytochrome c oxidase, subunit 8"/>
    <property type="match status" value="1"/>
</dbReference>
<dbReference type="InterPro" id="IPR003205">
    <property type="entry name" value="Cyt_c_oxidase_su8"/>
</dbReference>
<dbReference type="InterPro" id="IPR036548">
    <property type="entry name" value="Cyt_c_oxidase_su8_sf"/>
</dbReference>
<dbReference type="PANTHER" id="PTHR16717">
    <property type="entry name" value="CYTOCHROME C OXIDASE POLYPEPTIDE VIII"/>
    <property type="match status" value="1"/>
</dbReference>
<dbReference type="PANTHER" id="PTHR16717:SF2">
    <property type="entry name" value="CYTOCHROME C OXIDASE SUBUNIT 8C, MITOCHONDRIAL"/>
    <property type="match status" value="1"/>
</dbReference>
<dbReference type="Pfam" id="PF02285">
    <property type="entry name" value="COX8"/>
    <property type="match status" value="1"/>
</dbReference>
<dbReference type="SUPFAM" id="SSF81431">
    <property type="entry name" value="Mitochondrial cytochrome c oxidase subunit VIIIb (aka IX)"/>
    <property type="match status" value="1"/>
</dbReference>
<protein>
    <recommendedName>
        <fullName>Cytochrome c oxidase subunit 8C, mitochondrial</fullName>
    </recommendedName>
    <alternativeName>
        <fullName>Cytochrome c oxidase polypeptide 8 isoform 3</fullName>
    </alternativeName>
    <alternativeName>
        <fullName>Cytochrome c oxidase polypeptide VIII isoform 3</fullName>
        <shortName>COX VIII-3</shortName>
    </alternativeName>
    <alternativeName>
        <fullName>Cytochrome c oxidase subunit 8-3</fullName>
    </alternativeName>
</protein>
<keyword id="KW-0472">Membrane</keyword>
<keyword id="KW-0496">Mitochondrion</keyword>
<keyword id="KW-0999">Mitochondrion inner membrane</keyword>
<keyword id="KW-1185">Reference proteome</keyword>
<keyword id="KW-0809">Transit peptide</keyword>
<keyword id="KW-0812">Transmembrane</keyword>
<keyword id="KW-1133">Transmembrane helix</keyword>